<proteinExistence type="inferred from homology"/>
<dbReference type="EC" id="3.6.1.15" evidence="1"/>
<dbReference type="EC" id="3.6.1.6" evidence="1"/>
<dbReference type="EMBL" id="AL591980">
    <property type="protein sequence ID" value="CAC99765.1"/>
    <property type="molecule type" value="Genomic_DNA"/>
</dbReference>
<dbReference type="PIR" id="AG1285">
    <property type="entry name" value="AG1285"/>
</dbReference>
<dbReference type="RefSeq" id="NP_465212.1">
    <property type="nucleotide sequence ID" value="NC_003210.1"/>
</dbReference>
<dbReference type="RefSeq" id="WP_003723875.1">
    <property type="nucleotide sequence ID" value="NZ_CP149495.1"/>
</dbReference>
<dbReference type="SMR" id="Q8Y6J7"/>
<dbReference type="STRING" id="169963.gene:17594368"/>
<dbReference type="PaxDb" id="169963-lmo1687"/>
<dbReference type="EnsemblBacteria" id="CAC99765">
    <property type="protein sequence ID" value="CAC99765"/>
    <property type="gene ID" value="CAC99765"/>
</dbReference>
<dbReference type="GeneID" id="985631"/>
<dbReference type="KEGG" id="lmo:lmo1687"/>
<dbReference type="PATRIC" id="fig|169963.11.peg.1730"/>
<dbReference type="eggNOG" id="COG3557">
    <property type="taxonomic scope" value="Bacteria"/>
</dbReference>
<dbReference type="HOGENOM" id="CLU_109787_1_0_9"/>
<dbReference type="OrthoDB" id="1645325at2"/>
<dbReference type="PhylomeDB" id="Q8Y6J7"/>
<dbReference type="BioCyc" id="LMON169963:LMO1687-MONOMER"/>
<dbReference type="Proteomes" id="UP000000817">
    <property type="component" value="Chromosome"/>
</dbReference>
<dbReference type="GO" id="GO:0000287">
    <property type="term" value="F:magnesium ion binding"/>
    <property type="evidence" value="ECO:0007669"/>
    <property type="project" value="UniProtKB-UniRule"/>
</dbReference>
<dbReference type="GO" id="GO:0017110">
    <property type="term" value="F:nucleoside diphosphate phosphatase activity"/>
    <property type="evidence" value="ECO:0007669"/>
    <property type="project" value="UniProtKB-UniRule"/>
</dbReference>
<dbReference type="GO" id="GO:0017111">
    <property type="term" value="F:ribonucleoside triphosphate phosphatase activity"/>
    <property type="evidence" value="ECO:0007669"/>
    <property type="project" value="UniProtKB-UniRule"/>
</dbReference>
<dbReference type="Gene3D" id="2.40.380.10">
    <property type="entry name" value="FomD-like"/>
    <property type="match status" value="1"/>
</dbReference>
<dbReference type="HAMAP" id="MF_01568">
    <property type="entry name" value="Ntdp"/>
    <property type="match status" value="1"/>
</dbReference>
<dbReference type="InterPro" id="IPR007295">
    <property type="entry name" value="DUF402"/>
</dbReference>
<dbReference type="InterPro" id="IPR035930">
    <property type="entry name" value="FomD-like_sf"/>
</dbReference>
<dbReference type="InterPro" id="IPR050212">
    <property type="entry name" value="Ntdp-like"/>
</dbReference>
<dbReference type="InterPro" id="IPR016882">
    <property type="entry name" value="SA1684"/>
</dbReference>
<dbReference type="NCBIfam" id="NF010183">
    <property type="entry name" value="PRK13662.1"/>
    <property type="match status" value="1"/>
</dbReference>
<dbReference type="PANTHER" id="PTHR39159">
    <property type="match status" value="1"/>
</dbReference>
<dbReference type="PANTHER" id="PTHR39159:SF1">
    <property type="entry name" value="UPF0374 PROTEIN YGAC"/>
    <property type="match status" value="1"/>
</dbReference>
<dbReference type="Pfam" id="PF04167">
    <property type="entry name" value="DUF402"/>
    <property type="match status" value="1"/>
</dbReference>
<dbReference type="PIRSF" id="PIRSF028345">
    <property type="entry name" value="UCP028345"/>
    <property type="match status" value="1"/>
</dbReference>
<dbReference type="SUPFAM" id="SSF159234">
    <property type="entry name" value="FomD-like"/>
    <property type="match status" value="1"/>
</dbReference>
<name>NTDP_LISMO</name>
<protein>
    <recommendedName>
        <fullName evidence="1">Nucleoside triphosphate/diphosphate phosphatase</fullName>
        <ecNumber evidence="1">3.6.1.15</ecNumber>
        <ecNumber evidence="1">3.6.1.6</ecNumber>
    </recommendedName>
</protein>
<comment type="function">
    <text evidence="1">Has nucleoside phosphatase activity towards nucleoside triphosphates and nucleoside diphosphates.</text>
</comment>
<comment type="catalytic activity">
    <reaction evidence="1">
        <text>a ribonucleoside 5'-triphosphate + H2O = a ribonucleoside 5'-diphosphate + phosphate + H(+)</text>
        <dbReference type="Rhea" id="RHEA:23680"/>
        <dbReference type="ChEBI" id="CHEBI:15377"/>
        <dbReference type="ChEBI" id="CHEBI:15378"/>
        <dbReference type="ChEBI" id="CHEBI:43474"/>
        <dbReference type="ChEBI" id="CHEBI:57930"/>
        <dbReference type="ChEBI" id="CHEBI:61557"/>
        <dbReference type="EC" id="3.6.1.15"/>
    </reaction>
</comment>
<comment type="catalytic activity">
    <reaction evidence="1">
        <text>a ribonucleoside 5'-diphosphate + H2O = a ribonucleoside 5'-phosphate + phosphate + H(+)</text>
        <dbReference type="Rhea" id="RHEA:36799"/>
        <dbReference type="ChEBI" id="CHEBI:15377"/>
        <dbReference type="ChEBI" id="CHEBI:15378"/>
        <dbReference type="ChEBI" id="CHEBI:43474"/>
        <dbReference type="ChEBI" id="CHEBI:57930"/>
        <dbReference type="ChEBI" id="CHEBI:58043"/>
        <dbReference type="EC" id="3.6.1.6"/>
    </reaction>
</comment>
<comment type="cofactor">
    <cofactor evidence="1">
        <name>Mg(2+)</name>
        <dbReference type="ChEBI" id="CHEBI:18420"/>
    </cofactor>
</comment>
<comment type="similarity">
    <text evidence="1">Belongs to the Ntdp family.</text>
</comment>
<organism>
    <name type="scientific">Listeria monocytogenes serovar 1/2a (strain ATCC BAA-679 / EGD-e)</name>
    <dbReference type="NCBI Taxonomy" id="169963"/>
    <lineage>
        <taxon>Bacteria</taxon>
        <taxon>Bacillati</taxon>
        <taxon>Bacillota</taxon>
        <taxon>Bacilli</taxon>
        <taxon>Bacillales</taxon>
        <taxon>Listeriaceae</taxon>
        <taxon>Listeria</taxon>
    </lineage>
</organism>
<sequence>MYLPKEKEIIQIKSYKHNGKLHRTWKKTVVLKSTENIIIGGNDHTLVVEADGRKWVTREPSICYFHSDYWFNVISMIREDGIYHYCNLGTPFAVDEQALKYIDYDLDIKVFPDGRFHLLDEGEYEQHRRQMKYPDSIDRILRHNVDVLSHWILDKKGPFSPDYIDIWYEKYKEYR</sequence>
<evidence type="ECO:0000255" key="1">
    <source>
        <dbReference type="HAMAP-Rule" id="MF_01568"/>
    </source>
</evidence>
<reference key="1">
    <citation type="journal article" date="2001" name="Science">
        <title>Comparative genomics of Listeria species.</title>
        <authorList>
            <person name="Glaser P."/>
            <person name="Frangeul L."/>
            <person name="Buchrieser C."/>
            <person name="Rusniok C."/>
            <person name="Amend A."/>
            <person name="Baquero F."/>
            <person name="Berche P."/>
            <person name="Bloecker H."/>
            <person name="Brandt P."/>
            <person name="Chakraborty T."/>
            <person name="Charbit A."/>
            <person name="Chetouani F."/>
            <person name="Couve E."/>
            <person name="de Daruvar A."/>
            <person name="Dehoux P."/>
            <person name="Domann E."/>
            <person name="Dominguez-Bernal G."/>
            <person name="Duchaud E."/>
            <person name="Durant L."/>
            <person name="Dussurget O."/>
            <person name="Entian K.-D."/>
            <person name="Fsihi H."/>
            <person name="Garcia-del Portillo F."/>
            <person name="Garrido P."/>
            <person name="Gautier L."/>
            <person name="Goebel W."/>
            <person name="Gomez-Lopez N."/>
            <person name="Hain T."/>
            <person name="Hauf J."/>
            <person name="Jackson D."/>
            <person name="Jones L.-M."/>
            <person name="Kaerst U."/>
            <person name="Kreft J."/>
            <person name="Kuhn M."/>
            <person name="Kunst F."/>
            <person name="Kurapkat G."/>
            <person name="Madueno E."/>
            <person name="Maitournam A."/>
            <person name="Mata Vicente J."/>
            <person name="Ng E."/>
            <person name="Nedjari H."/>
            <person name="Nordsiek G."/>
            <person name="Novella S."/>
            <person name="de Pablos B."/>
            <person name="Perez-Diaz J.-C."/>
            <person name="Purcell R."/>
            <person name="Remmel B."/>
            <person name="Rose M."/>
            <person name="Schlueter T."/>
            <person name="Simoes N."/>
            <person name="Tierrez A."/>
            <person name="Vazquez-Boland J.-A."/>
            <person name="Voss H."/>
            <person name="Wehland J."/>
            <person name="Cossart P."/>
        </authorList>
    </citation>
    <scope>NUCLEOTIDE SEQUENCE [LARGE SCALE GENOMIC DNA]</scope>
    <source>
        <strain>ATCC BAA-679 / EGD-e</strain>
    </source>
</reference>
<keyword id="KW-0378">Hydrolase</keyword>
<keyword id="KW-0460">Magnesium</keyword>
<keyword id="KW-0479">Metal-binding</keyword>
<keyword id="KW-1185">Reference proteome</keyword>
<accession>Q8Y6J7</accession>
<gene>
    <name type="ordered locus">lmo1687</name>
</gene>
<feature type="chain" id="PRO_0000248102" description="Nucleoside triphosphate/diphosphate phosphatase">
    <location>
        <begin position="1"/>
        <end position="175"/>
    </location>
</feature>
<feature type="active site" description="Proton donor" evidence="1">
    <location>
        <position position="23"/>
    </location>
</feature>
<feature type="binding site" evidence="1">
    <location>
        <position position="87"/>
    </location>
    <ligand>
        <name>Mg(2+)</name>
        <dbReference type="ChEBI" id="CHEBI:18420"/>
        <label>1</label>
    </ligand>
</feature>
<feature type="binding site" evidence="1">
    <location>
        <position position="103"/>
    </location>
    <ligand>
        <name>Mg(2+)</name>
        <dbReference type="ChEBI" id="CHEBI:18420"/>
        <label>1</label>
    </ligand>
</feature>
<feature type="binding site" evidence="1">
    <location>
        <position position="105"/>
    </location>
    <ligand>
        <name>Mg(2+)</name>
        <dbReference type="ChEBI" id="CHEBI:18420"/>
        <label>2</label>
    </ligand>
</feature>
<feature type="binding site" evidence="1">
    <location>
        <position position="107"/>
    </location>
    <ligand>
        <name>Mg(2+)</name>
        <dbReference type="ChEBI" id="CHEBI:18420"/>
        <label>1</label>
    </ligand>
</feature>
<feature type="binding site" evidence="1">
    <location>
        <position position="107"/>
    </location>
    <ligand>
        <name>Mg(2+)</name>
        <dbReference type="ChEBI" id="CHEBI:18420"/>
        <label>2</label>
    </ligand>
</feature>
<feature type="binding site" evidence="1">
    <location>
        <position position="120"/>
    </location>
    <ligand>
        <name>Mg(2+)</name>
        <dbReference type="ChEBI" id="CHEBI:18420"/>
        <label>2</label>
    </ligand>
</feature>
<feature type="binding site" evidence="1">
    <location>
        <position position="123"/>
    </location>
    <ligand>
        <name>Mg(2+)</name>
        <dbReference type="ChEBI" id="CHEBI:18420"/>
        <label>2</label>
    </ligand>
</feature>